<comment type="function">
    <text evidence="1">Produces ATP from ADP in the presence of a proton gradient across the membrane. The gamma chain is believed to be important in regulating ATPase activity and the flow of protons through the CF(0) complex.</text>
</comment>
<comment type="subunit">
    <text evidence="1">F-type ATPases have 2 components, CF(1) - the catalytic core - and CF(0) - the membrane proton channel. CF(1) has five subunits: alpha(3), beta(3), gamma(1), delta(1), epsilon(1). CF(0) has three main subunits: a, b and c.</text>
</comment>
<comment type="subcellular location">
    <subcellularLocation>
        <location evidence="1">Cell inner membrane</location>
        <topology evidence="1">Peripheral membrane protein</topology>
    </subcellularLocation>
</comment>
<comment type="similarity">
    <text evidence="1">Belongs to the ATPase gamma chain family.</text>
</comment>
<accession>Q8PGG6</accession>
<name>ATPG_XANAC</name>
<protein>
    <recommendedName>
        <fullName evidence="1">ATP synthase gamma chain</fullName>
    </recommendedName>
    <alternativeName>
        <fullName evidence="1">ATP synthase F1 sector gamma subunit</fullName>
    </alternativeName>
    <alternativeName>
        <fullName evidence="1">F-ATPase gamma subunit</fullName>
    </alternativeName>
</protein>
<keyword id="KW-0066">ATP synthesis</keyword>
<keyword id="KW-0997">Cell inner membrane</keyword>
<keyword id="KW-1003">Cell membrane</keyword>
<keyword id="KW-0139">CF(1)</keyword>
<keyword id="KW-0375">Hydrogen ion transport</keyword>
<keyword id="KW-0406">Ion transport</keyword>
<keyword id="KW-0472">Membrane</keyword>
<keyword id="KW-0813">Transport</keyword>
<sequence length="287" mass="31984">MAGGREIKTKIKSVQNTRKVTRALEMVSASKIRKAQERMKTSRPYAQAMKQVIGHLAQASTDFQHPFLIEREQVKRVGYIVISSDRGLAGGLNNNLFRKMLGEVRPWQDKGAEIDVVTIGQKASAFFRRVKVNMVGSVTHLGDSPQVEQLIGVIKVMIDAFIEGKVDRVYLVYNRFVNTMTQKASFDQLLPLPAAEHKVAHHDWDYLYEPDAASVLEHVMTRYIESLVYQAVLENVASEHAARMVAMKAASDNANKMIGTLQLVYNKARQAAITQEISEIVSGAAAV</sequence>
<reference key="1">
    <citation type="journal article" date="2002" name="Nature">
        <title>Comparison of the genomes of two Xanthomonas pathogens with differing host specificities.</title>
        <authorList>
            <person name="da Silva A.C.R."/>
            <person name="Ferro J.A."/>
            <person name="Reinach F.C."/>
            <person name="Farah C.S."/>
            <person name="Furlan L.R."/>
            <person name="Quaggio R.B."/>
            <person name="Monteiro-Vitorello C.B."/>
            <person name="Van Sluys M.A."/>
            <person name="Almeida N.F. Jr."/>
            <person name="Alves L.M.C."/>
            <person name="do Amaral A.M."/>
            <person name="Bertolini M.C."/>
            <person name="Camargo L.E.A."/>
            <person name="Camarotte G."/>
            <person name="Cannavan F."/>
            <person name="Cardozo J."/>
            <person name="Chambergo F."/>
            <person name="Ciapina L.P."/>
            <person name="Cicarelli R.M.B."/>
            <person name="Coutinho L.L."/>
            <person name="Cursino-Santos J.R."/>
            <person name="El-Dorry H."/>
            <person name="Faria J.B."/>
            <person name="Ferreira A.J.S."/>
            <person name="Ferreira R.C.C."/>
            <person name="Ferro M.I.T."/>
            <person name="Formighieri E.F."/>
            <person name="Franco M.C."/>
            <person name="Greggio C.C."/>
            <person name="Gruber A."/>
            <person name="Katsuyama A.M."/>
            <person name="Kishi L.T."/>
            <person name="Leite R.P."/>
            <person name="Lemos E.G.M."/>
            <person name="Lemos M.V.F."/>
            <person name="Locali E.C."/>
            <person name="Machado M.A."/>
            <person name="Madeira A.M.B.N."/>
            <person name="Martinez-Rossi N.M."/>
            <person name="Martins E.C."/>
            <person name="Meidanis J."/>
            <person name="Menck C.F.M."/>
            <person name="Miyaki C.Y."/>
            <person name="Moon D.H."/>
            <person name="Moreira L.M."/>
            <person name="Novo M.T.M."/>
            <person name="Okura V.K."/>
            <person name="Oliveira M.C."/>
            <person name="Oliveira V.R."/>
            <person name="Pereira H.A."/>
            <person name="Rossi A."/>
            <person name="Sena J.A.D."/>
            <person name="Silva C."/>
            <person name="de Souza R.F."/>
            <person name="Spinola L.A.F."/>
            <person name="Takita M.A."/>
            <person name="Tamura R.E."/>
            <person name="Teixeira E.C."/>
            <person name="Tezza R.I.D."/>
            <person name="Trindade dos Santos M."/>
            <person name="Truffi D."/>
            <person name="Tsai S.M."/>
            <person name="White F.F."/>
            <person name="Setubal J.C."/>
            <person name="Kitajima J.P."/>
        </authorList>
    </citation>
    <scope>NUCLEOTIDE SEQUENCE [LARGE SCALE GENOMIC DNA]</scope>
    <source>
        <strain>306</strain>
    </source>
</reference>
<proteinExistence type="inferred from homology"/>
<gene>
    <name evidence="1" type="primary">atpG</name>
    <name type="ordered locus">XAC3650</name>
</gene>
<evidence type="ECO:0000255" key="1">
    <source>
        <dbReference type="HAMAP-Rule" id="MF_00815"/>
    </source>
</evidence>
<feature type="chain" id="PRO_0000073420" description="ATP synthase gamma chain">
    <location>
        <begin position="1"/>
        <end position="287"/>
    </location>
</feature>
<dbReference type="EMBL" id="AE008923">
    <property type="protein sequence ID" value="AAM38493.1"/>
    <property type="molecule type" value="Genomic_DNA"/>
</dbReference>
<dbReference type="RefSeq" id="WP_011052425.1">
    <property type="nucleotide sequence ID" value="NC_003919.1"/>
</dbReference>
<dbReference type="SMR" id="Q8PGG6"/>
<dbReference type="GeneID" id="66912682"/>
<dbReference type="KEGG" id="xac:XAC3650"/>
<dbReference type="eggNOG" id="COG0224">
    <property type="taxonomic scope" value="Bacteria"/>
</dbReference>
<dbReference type="HOGENOM" id="CLU_050669_0_1_6"/>
<dbReference type="Proteomes" id="UP000000576">
    <property type="component" value="Chromosome"/>
</dbReference>
<dbReference type="GO" id="GO:0005886">
    <property type="term" value="C:plasma membrane"/>
    <property type="evidence" value="ECO:0007669"/>
    <property type="project" value="UniProtKB-SubCell"/>
</dbReference>
<dbReference type="GO" id="GO:0045259">
    <property type="term" value="C:proton-transporting ATP synthase complex"/>
    <property type="evidence" value="ECO:0007669"/>
    <property type="project" value="UniProtKB-KW"/>
</dbReference>
<dbReference type="GO" id="GO:0005524">
    <property type="term" value="F:ATP binding"/>
    <property type="evidence" value="ECO:0007669"/>
    <property type="project" value="UniProtKB-UniRule"/>
</dbReference>
<dbReference type="GO" id="GO:0046933">
    <property type="term" value="F:proton-transporting ATP synthase activity, rotational mechanism"/>
    <property type="evidence" value="ECO:0007669"/>
    <property type="project" value="UniProtKB-UniRule"/>
</dbReference>
<dbReference type="GO" id="GO:0042777">
    <property type="term" value="P:proton motive force-driven plasma membrane ATP synthesis"/>
    <property type="evidence" value="ECO:0007669"/>
    <property type="project" value="UniProtKB-UniRule"/>
</dbReference>
<dbReference type="CDD" id="cd12151">
    <property type="entry name" value="F1-ATPase_gamma"/>
    <property type="match status" value="1"/>
</dbReference>
<dbReference type="FunFam" id="1.10.287.80:FF:000005">
    <property type="entry name" value="ATP synthase gamma chain"/>
    <property type="match status" value="1"/>
</dbReference>
<dbReference type="FunFam" id="3.40.1380.10:FF:000007">
    <property type="entry name" value="ATP synthase gamma chain"/>
    <property type="match status" value="1"/>
</dbReference>
<dbReference type="Gene3D" id="3.40.1380.10">
    <property type="match status" value="1"/>
</dbReference>
<dbReference type="Gene3D" id="1.10.287.80">
    <property type="entry name" value="ATP synthase, gamma subunit, helix hairpin domain"/>
    <property type="match status" value="1"/>
</dbReference>
<dbReference type="HAMAP" id="MF_00815">
    <property type="entry name" value="ATP_synth_gamma_bact"/>
    <property type="match status" value="1"/>
</dbReference>
<dbReference type="InterPro" id="IPR035968">
    <property type="entry name" value="ATP_synth_F1_ATPase_gsu"/>
</dbReference>
<dbReference type="InterPro" id="IPR000131">
    <property type="entry name" value="ATP_synth_F1_gsu"/>
</dbReference>
<dbReference type="InterPro" id="IPR023632">
    <property type="entry name" value="ATP_synth_F1_gsu_CS"/>
</dbReference>
<dbReference type="NCBIfam" id="TIGR01146">
    <property type="entry name" value="ATPsyn_F1gamma"/>
    <property type="match status" value="1"/>
</dbReference>
<dbReference type="NCBIfam" id="NF004144">
    <property type="entry name" value="PRK05621.1-1"/>
    <property type="match status" value="1"/>
</dbReference>
<dbReference type="PANTHER" id="PTHR11693">
    <property type="entry name" value="ATP SYNTHASE GAMMA CHAIN"/>
    <property type="match status" value="1"/>
</dbReference>
<dbReference type="PANTHER" id="PTHR11693:SF22">
    <property type="entry name" value="ATP SYNTHASE SUBUNIT GAMMA, MITOCHONDRIAL"/>
    <property type="match status" value="1"/>
</dbReference>
<dbReference type="Pfam" id="PF00231">
    <property type="entry name" value="ATP-synt"/>
    <property type="match status" value="1"/>
</dbReference>
<dbReference type="PRINTS" id="PR00126">
    <property type="entry name" value="ATPASEGAMMA"/>
</dbReference>
<dbReference type="SUPFAM" id="SSF52943">
    <property type="entry name" value="ATP synthase (F1-ATPase), gamma subunit"/>
    <property type="match status" value="1"/>
</dbReference>
<dbReference type="PROSITE" id="PS00153">
    <property type="entry name" value="ATPASE_GAMMA"/>
    <property type="match status" value="1"/>
</dbReference>
<organism>
    <name type="scientific">Xanthomonas axonopodis pv. citri (strain 306)</name>
    <dbReference type="NCBI Taxonomy" id="190486"/>
    <lineage>
        <taxon>Bacteria</taxon>
        <taxon>Pseudomonadati</taxon>
        <taxon>Pseudomonadota</taxon>
        <taxon>Gammaproteobacteria</taxon>
        <taxon>Lysobacterales</taxon>
        <taxon>Lysobacteraceae</taxon>
        <taxon>Xanthomonas</taxon>
    </lineage>
</organism>